<proteinExistence type="inferred from homology"/>
<sequence>MAVFTPPSGNSNSTDHTHTQDDHDKDDNDIKKFYIRPSLGLKLWGPLVPAPDNLPGLYTLITIQSAVGFFALWRLRRLYKLPPPRRIATGTHSDLSFGELPSEMIVNGKTKIKKDIADFPTLNRFSTTHGDIVLAPPPIIPRQSRFVSVRKLLWGLFGSLLLSQSLLELTRLNFLKYDPWCDEMKSVRDKKFFNNIVKYYHEGIDPTKIKVKDAMNGTPLSTNIPEVKQSVALARAQVEAQNPIIKWFGPLEYKPMSFNEYLNRMEFHLDMFEFFQNKRNIRENSIELINSISHNPQSSSTGLEGLSESKKLHLQNVEKRLHFLASSGDSISAPVKRSSTTLSRGVILPHDTKGPQDIDLDTIRSLYDPWMTLALETSLSIKFIPTTMPSHTKTPTSTDQPLPGPTPKALTNEKTH</sequence>
<accession>A6ZTE8</accession>
<gene>
    <name type="primary">MGR1</name>
    <name type="ORF">SCY_0541</name>
</gene>
<reference key="1">
    <citation type="journal article" date="2007" name="Proc. Natl. Acad. Sci. U.S.A.">
        <title>Genome sequencing and comparative analysis of Saccharomyces cerevisiae strain YJM789.</title>
        <authorList>
            <person name="Wei W."/>
            <person name="McCusker J.H."/>
            <person name="Hyman R.W."/>
            <person name="Jones T."/>
            <person name="Ning Y."/>
            <person name="Cao Z."/>
            <person name="Gu Z."/>
            <person name="Bruno D."/>
            <person name="Miranda M."/>
            <person name="Nguyen M."/>
            <person name="Wilhelmy J."/>
            <person name="Komp C."/>
            <person name="Tamse R."/>
            <person name="Wang X."/>
            <person name="Jia P."/>
            <person name="Luedi P."/>
            <person name="Oefner P.J."/>
            <person name="David L."/>
            <person name="Dietrich F.S."/>
            <person name="Li Y."/>
            <person name="Davis R.W."/>
            <person name="Steinmetz L.M."/>
        </authorList>
    </citation>
    <scope>NUCLEOTIDE SEQUENCE [LARGE SCALE GENOMIC DNA]</scope>
    <source>
        <strain>YJM789</strain>
    </source>
</reference>
<evidence type="ECO:0000250" key="1"/>
<evidence type="ECO:0000255" key="2"/>
<evidence type="ECO:0000256" key="3">
    <source>
        <dbReference type="SAM" id="MobiDB-lite"/>
    </source>
</evidence>
<evidence type="ECO:0000305" key="4"/>
<comment type="function">
    <text evidence="1">Component of the mitochondrial inner membrane i-AAA protease complex required for mitochondrial inner membrane protein turnover. Required for growth of cells lacking the mitochondrial genome (By similarity).</text>
</comment>
<comment type="subunit">
    <text evidence="1">Component of the mitochondrial inner membrane i-AAA protease complex composed of at least MRG1 and YME1. Interacts directly with YME1 (By similarity).</text>
</comment>
<comment type="subcellular location">
    <subcellularLocation>
        <location evidence="1">Mitochondrion inner membrane</location>
        <topology evidence="1">Multi-pass membrane protein</topology>
    </subcellularLocation>
</comment>
<comment type="similarity">
    <text evidence="4">Belongs to the MGR1 family.</text>
</comment>
<protein>
    <recommendedName>
        <fullName>Mitochondrial inner membrane i-AAA protease complex subunit MGR1</fullName>
    </recommendedName>
    <alternativeName>
        <fullName>Mitochondrial genome-required protein 1</fullName>
    </alternativeName>
</protein>
<name>MGR1_YEAS7</name>
<feature type="chain" id="PRO_0000324416" description="Mitochondrial inner membrane i-AAA protease complex subunit MGR1">
    <location>
        <begin position="1"/>
        <end position="416"/>
    </location>
</feature>
<feature type="topological domain" description="Mitochondrial intermembrane" evidence="1">
    <location>
        <begin position="1"/>
        <end position="56"/>
    </location>
</feature>
<feature type="transmembrane region" description="Helical" evidence="2">
    <location>
        <begin position="57"/>
        <end position="73"/>
    </location>
</feature>
<feature type="topological domain" description="Mitochondrial matrix" evidence="1">
    <location>
        <begin position="74"/>
        <end position="151"/>
    </location>
</feature>
<feature type="transmembrane region" description="Helical" evidence="2">
    <location>
        <begin position="152"/>
        <end position="169"/>
    </location>
</feature>
<feature type="topological domain" description="Mitochondrial intermembrane" evidence="1">
    <location>
        <begin position="170"/>
        <end position="416"/>
    </location>
</feature>
<feature type="region of interest" description="Disordered" evidence="3">
    <location>
        <begin position="1"/>
        <end position="28"/>
    </location>
</feature>
<feature type="region of interest" description="Disordered" evidence="3">
    <location>
        <begin position="390"/>
        <end position="416"/>
    </location>
</feature>
<feature type="compositionally biased region" description="Basic and acidic residues" evidence="3">
    <location>
        <begin position="15"/>
        <end position="28"/>
    </location>
</feature>
<feature type="compositionally biased region" description="Polar residues" evidence="3">
    <location>
        <begin position="390"/>
        <end position="400"/>
    </location>
</feature>
<dbReference type="EMBL" id="AAFW02000089">
    <property type="protein sequence ID" value="EDN62087.1"/>
    <property type="molecule type" value="Genomic_DNA"/>
</dbReference>
<dbReference type="HOGENOM" id="CLU_039216_0_0_1"/>
<dbReference type="OrthoDB" id="32285at4893"/>
<dbReference type="Proteomes" id="UP000007060">
    <property type="component" value="Unassembled WGS sequence"/>
</dbReference>
<dbReference type="GO" id="GO:0005743">
    <property type="term" value="C:mitochondrial inner membrane"/>
    <property type="evidence" value="ECO:0007669"/>
    <property type="project" value="UniProtKB-SubCell"/>
</dbReference>
<dbReference type="InterPro" id="IPR013911">
    <property type="entry name" value="i-AAA_Mgr1"/>
</dbReference>
<dbReference type="Pfam" id="PF08602">
    <property type="entry name" value="Mgr1"/>
    <property type="match status" value="1"/>
</dbReference>
<keyword id="KW-0472">Membrane</keyword>
<keyword id="KW-0496">Mitochondrion</keyword>
<keyword id="KW-0999">Mitochondrion inner membrane</keyword>
<keyword id="KW-0812">Transmembrane</keyword>
<keyword id="KW-1133">Transmembrane helix</keyword>
<organism>
    <name type="scientific">Saccharomyces cerevisiae (strain YJM789)</name>
    <name type="common">Baker's yeast</name>
    <dbReference type="NCBI Taxonomy" id="307796"/>
    <lineage>
        <taxon>Eukaryota</taxon>
        <taxon>Fungi</taxon>
        <taxon>Dikarya</taxon>
        <taxon>Ascomycota</taxon>
        <taxon>Saccharomycotina</taxon>
        <taxon>Saccharomycetes</taxon>
        <taxon>Saccharomycetales</taxon>
        <taxon>Saccharomycetaceae</taxon>
        <taxon>Saccharomyces</taxon>
    </lineage>
</organism>